<evidence type="ECO:0000255" key="1">
    <source>
        <dbReference type="HAMAP-Rule" id="MF_01588"/>
    </source>
</evidence>
<proteinExistence type="inferred from homology"/>
<gene>
    <name evidence="1" type="primary">ligA</name>
    <name type="ordered locus">BG0562</name>
</gene>
<name>DNLJ_BORGP</name>
<protein>
    <recommendedName>
        <fullName evidence="1">DNA ligase</fullName>
        <ecNumber evidence="1">6.5.1.2</ecNumber>
    </recommendedName>
    <alternativeName>
        <fullName evidence="1">Polydeoxyribonucleotide synthase [NAD(+)]</fullName>
    </alternativeName>
</protein>
<feature type="chain" id="PRO_0000313148" description="DNA ligase">
    <location>
        <begin position="1"/>
        <end position="660"/>
    </location>
</feature>
<feature type="domain" description="BRCT" evidence="1">
    <location>
        <begin position="583"/>
        <end position="660"/>
    </location>
</feature>
<feature type="active site" description="N6-AMP-lysine intermediate" evidence="1">
    <location>
        <position position="112"/>
    </location>
</feature>
<feature type="binding site" evidence="1">
    <location>
        <begin position="33"/>
        <end position="37"/>
    </location>
    <ligand>
        <name>NAD(+)</name>
        <dbReference type="ChEBI" id="CHEBI:57540"/>
    </ligand>
</feature>
<feature type="binding site" evidence="1">
    <location>
        <begin position="82"/>
        <end position="83"/>
    </location>
    <ligand>
        <name>NAD(+)</name>
        <dbReference type="ChEBI" id="CHEBI:57540"/>
    </ligand>
</feature>
<feature type="binding site" evidence="1">
    <location>
        <position position="110"/>
    </location>
    <ligand>
        <name>NAD(+)</name>
        <dbReference type="ChEBI" id="CHEBI:57540"/>
    </ligand>
</feature>
<feature type="binding site" evidence="1">
    <location>
        <position position="133"/>
    </location>
    <ligand>
        <name>NAD(+)</name>
        <dbReference type="ChEBI" id="CHEBI:57540"/>
    </ligand>
</feature>
<feature type="binding site" evidence="1">
    <location>
        <position position="167"/>
    </location>
    <ligand>
        <name>NAD(+)</name>
        <dbReference type="ChEBI" id="CHEBI:57540"/>
    </ligand>
</feature>
<feature type="binding site" evidence="1">
    <location>
        <position position="281"/>
    </location>
    <ligand>
        <name>NAD(+)</name>
        <dbReference type="ChEBI" id="CHEBI:57540"/>
    </ligand>
</feature>
<feature type="binding site" evidence="1">
    <location>
        <position position="305"/>
    </location>
    <ligand>
        <name>NAD(+)</name>
        <dbReference type="ChEBI" id="CHEBI:57540"/>
    </ligand>
</feature>
<feature type="binding site" evidence="1">
    <location>
        <position position="396"/>
    </location>
    <ligand>
        <name>Zn(2+)</name>
        <dbReference type="ChEBI" id="CHEBI:29105"/>
    </ligand>
</feature>
<feature type="binding site" evidence="1">
    <location>
        <position position="399"/>
    </location>
    <ligand>
        <name>Zn(2+)</name>
        <dbReference type="ChEBI" id="CHEBI:29105"/>
    </ligand>
</feature>
<feature type="binding site" evidence="1">
    <location>
        <position position="412"/>
    </location>
    <ligand>
        <name>Zn(2+)</name>
        <dbReference type="ChEBI" id="CHEBI:29105"/>
    </ligand>
</feature>
<feature type="binding site" evidence="1">
    <location>
        <position position="417"/>
    </location>
    <ligand>
        <name>Zn(2+)</name>
        <dbReference type="ChEBI" id="CHEBI:29105"/>
    </ligand>
</feature>
<reference key="1">
    <citation type="journal article" date="2004" name="Nucleic Acids Res.">
        <title>Comparative analysis of the Borrelia garinii genome.</title>
        <authorList>
            <person name="Gloeckner G."/>
            <person name="Lehmann R."/>
            <person name="Romualdi A."/>
            <person name="Pradella S."/>
            <person name="Schulte-Spechtel U."/>
            <person name="Schilhabel M."/>
            <person name="Wilske B."/>
            <person name="Suehnel J."/>
            <person name="Platzer M."/>
        </authorList>
    </citation>
    <scope>NUCLEOTIDE SEQUENCE [LARGE SCALE GENOMIC DNA]</scope>
    <source>
        <strain>ATCC BAA-2496 / DSM 23469 / PBi</strain>
    </source>
</reference>
<sequence>MSIKIQQEIEDLKKLIRKWDKEYYVDSLPSVEDFVYDNHILRLKELESRHPEYKTLDSPTLKFGSDLLNNFEEVEHSVPILSLDKVYDLDLLKSWIDKIDFNNSFNISVEPKIDGCSIVLYYKDGILEKALTRGNGKFGNDVTKNIRTIRHIPLFLDEKVDLVLRGEVYITKENFFKINKFLEKPYTSSRNLASGILRRVDSREVANFPLNIFIYDFLNAELELKTNDLAIAKLKKLGFKVDPLIRFFDQKSSIIEVLNYIADITKKRNSFEYEIDGVVLKVSEFVLREKLGYTSHHPKWAMAYKFEALSGFSRVNSIVVQVGRSGKITPVANIDKVFVSGAFITNATLHNQDYIISIGLNVGDVVKVSRRGDVIPAVEMVINKCSKGVFKVPDNCPACKTVLVKEGAHFFCTNNSCPSVAVERIKYFCSKNCMDIEGFSDKTISFLFEKEFISSEIDLYTFNFYKLLKFKGFKDRKVYNLINSIEASKKKPFSKLLLSIGIKELGENAIRLLFLNNLNSFSKLFRLCQDRNFAFSTLLKIKGIGEKIALNIIEAFNDSTMLNKFKFFENLGFKMEESILIDDENRLLAGKKFCITGTFNGYSRSIIIDKLKNKGAIFKTCVTEGLDFLIVGEKAGSKLEKALNLNVKIMSFEDIKSYLN</sequence>
<comment type="function">
    <text evidence="1">DNA ligase that catalyzes the formation of phosphodiester linkages between 5'-phosphoryl and 3'-hydroxyl groups in double-stranded DNA using NAD as a coenzyme and as the energy source for the reaction. It is essential for DNA replication and repair of damaged DNA.</text>
</comment>
<comment type="catalytic activity">
    <reaction evidence="1">
        <text>NAD(+) + (deoxyribonucleotide)n-3'-hydroxyl + 5'-phospho-(deoxyribonucleotide)m = (deoxyribonucleotide)n+m + AMP + beta-nicotinamide D-nucleotide.</text>
        <dbReference type="EC" id="6.5.1.2"/>
    </reaction>
</comment>
<comment type="cofactor">
    <cofactor evidence="1">
        <name>Mg(2+)</name>
        <dbReference type="ChEBI" id="CHEBI:18420"/>
    </cofactor>
    <cofactor evidence="1">
        <name>Mn(2+)</name>
        <dbReference type="ChEBI" id="CHEBI:29035"/>
    </cofactor>
</comment>
<comment type="similarity">
    <text evidence="1">Belongs to the NAD-dependent DNA ligase family. LigA subfamily.</text>
</comment>
<dbReference type="EC" id="6.5.1.2" evidence="1"/>
<dbReference type="EMBL" id="CP000013">
    <property type="protein sequence ID" value="AAU07399.1"/>
    <property type="molecule type" value="Genomic_DNA"/>
</dbReference>
<dbReference type="RefSeq" id="WP_011193860.1">
    <property type="nucleotide sequence ID" value="NZ_CP028872.1"/>
</dbReference>
<dbReference type="SMR" id="Q660X2"/>
<dbReference type="GeneID" id="45161343"/>
<dbReference type="KEGG" id="bga:BG0562"/>
<dbReference type="eggNOG" id="COG0272">
    <property type="taxonomic scope" value="Bacteria"/>
</dbReference>
<dbReference type="HOGENOM" id="CLU_007764_2_1_12"/>
<dbReference type="OrthoDB" id="9759736at2"/>
<dbReference type="Proteomes" id="UP000002276">
    <property type="component" value="Chromosome"/>
</dbReference>
<dbReference type="GO" id="GO:0003677">
    <property type="term" value="F:DNA binding"/>
    <property type="evidence" value="ECO:0007669"/>
    <property type="project" value="InterPro"/>
</dbReference>
<dbReference type="GO" id="GO:0003911">
    <property type="term" value="F:DNA ligase (NAD+) activity"/>
    <property type="evidence" value="ECO:0007669"/>
    <property type="project" value="UniProtKB-UniRule"/>
</dbReference>
<dbReference type="GO" id="GO:0046872">
    <property type="term" value="F:metal ion binding"/>
    <property type="evidence" value="ECO:0007669"/>
    <property type="project" value="UniProtKB-KW"/>
</dbReference>
<dbReference type="GO" id="GO:0006281">
    <property type="term" value="P:DNA repair"/>
    <property type="evidence" value="ECO:0007669"/>
    <property type="project" value="UniProtKB-KW"/>
</dbReference>
<dbReference type="GO" id="GO:0006260">
    <property type="term" value="P:DNA replication"/>
    <property type="evidence" value="ECO:0007669"/>
    <property type="project" value="UniProtKB-KW"/>
</dbReference>
<dbReference type="CDD" id="cd17748">
    <property type="entry name" value="BRCT_DNA_ligase_like"/>
    <property type="match status" value="1"/>
</dbReference>
<dbReference type="CDD" id="cd00114">
    <property type="entry name" value="LIGANc"/>
    <property type="match status" value="1"/>
</dbReference>
<dbReference type="Gene3D" id="1.10.150.20">
    <property type="entry name" value="5' to 3' exonuclease, C-terminal subdomain"/>
    <property type="match status" value="2"/>
</dbReference>
<dbReference type="Gene3D" id="3.40.50.10190">
    <property type="entry name" value="BRCT domain"/>
    <property type="match status" value="1"/>
</dbReference>
<dbReference type="Gene3D" id="3.30.470.30">
    <property type="entry name" value="DNA ligase/mRNA capping enzyme"/>
    <property type="match status" value="1"/>
</dbReference>
<dbReference type="Gene3D" id="1.10.287.610">
    <property type="entry name" value="Helix hairpin bin"/>
    <property type="match status" value="1"/>
</dbReference>
<dbReference type="Gene3D" id="2.40.50.140">
    <property type="entry name" value="Nucleic acid-binding proteins"/>
    <property type="match status" value="1"/>
</dbReference>
<dbReference type="HAMAP" id="MF_01588">
    <property type="entry name" value="DNA_ligase_A"/>
    <property type="match status" value="1"/>
</dbReference>
<dbReference type="InterPro" id="IPR001357">
    <property type="entry name" value="BRCT_dom"/>
</dbReference>
<dbReference type="InterPro" id="IPR036420">
    <property type="entry name" value="BRCT_dom_sf"/>
</dbReference>
<dbReference type="InterPro" id="IPR001679">
    <property type="entry name" value="DNA_ligase"/>
</dbReference>
<dbReference type="InterPro" id="IPR013839">
    <property type="entry name" value="DNAligase_adenylation"/>
</dbReference>
<dbReference type="InterPro" id="IPR013840">
    <property type="entry name" value="DNAligase_N"/>
</dbReference>
<dbReference type="InterPro" id="IPR003583">
    <property type="entry name" value="Hlx-hairpin-Hlx_DNA-bd_motif"/>
</dbReference>
<dbReference type="InterPro" id="IPR012340">
    <property type="entry name" value="NA-bd_OB-fold"/>
</dbReference>
<dbReference type="InterPro" id="IPR004150">
    <property type="entry name" value="NAD_DNA_ligase_OB"/>
</dbReference>
<dbReference type="InterPro" id="IPR010994">
    <property type="entry name" value="RuvA_2-like"/>
</dbReference>
<dbReference type="NCBIfam" id="TIGR00575">
    <property type="entry name" value="dnlj"/>
    <property type="match status" value="1"/>
</dbReference>
<dbReference type="NCBIfam" id="NF005932">
    <property type="entry name" value="PRK07956.1"/>
    <property type="match status" value="1"/>
</dbReference>
<dbReference type="NCBIfam" id="NF010930">
    <property type="entry name" value="PRK14350.1"/>
    <property type="match status" value="1"/>
</dbReference>
<dbReference type="Pfam" id="PF00533">
    <property type="entry name" value="BRCT"/>
    <property type="match status" value="1"/>
</dbReference>
<dbReference type="Pfam" id="PF01653">
    <property type="entry name" value="DNA_ligase_aden"/>
    <property type="match status" value="1"/>
</dbReference>
<dbReference type="Pfam" id="PF03120">
    <property type="entry name" value="DNA_ligase_OB"/>
    <property type="match status" value="1"/>
</dbReference>
<dbReference type="PIRSF" id="PIRSF001604">
    <property type="entry name" value="LigA"/>
    <property type="match status" value="1"/>
</dbReference>
<dbReference type="SMART" id="SM00292">
    <property type="entry name" value="BRCT"/>
    <property type="match status" value="1"/>
</dbReference>
<dbReference type="SMART" id="SM00278">
    <property type="entry name" value="HhH1"/>
    <property type="match status" value="2"/>
</dbReference>
<dbReference type="SMART" id="SM00532">
    <property type="entry name" value="LIGANc"/>
    <property type="match status" value="1"/>
</dbReference>
<dbReference type="SUPFAM" id="SSF52113">
    <property type="entry name" value="BRCT domain"/>
    <property type="match status" value="1"/>
</dbReference>
<dbReference type="SUPFAM" id="SSF56091">
    <property type="entry name" value="DNA ligase/mRNA capping enzyme, catalytic domain"/>
    <property type="match status" value="1"/>
</dbReference>
<dbReference type="SUPFAM" id="SSF50249">
    <property type="entry name" value="Nucleic acid-binding proteins"/>
    <property type="match status" value="1"/>
</dbReference>
<dbReference type="SUPFAM" id="SSF47781">
    <property type="entry name" value="RuvA domain 2-like"/>
    <property type="match status" value="1"/>
</dbReference>
<dbReference type="PROSITE" id="PS50172">
    <property type="entry name" value="BRCT"/>
    <property type="match status" value="1"/>
</dbReference>
<organism>
    <name type="scientific">Borrelia garinii subsp. bavariensis (strain ATCC BAA-2496 / DSM 23469 / PBi)</name>
    <name type="common">Borreliella bavariensis</name>
    <dbReference type="NCBI Taxonomy" id="290434"/>
    <lineage>
        <taxon>Bacteria</taxon>
        <taxon>Pseudomonadati</taxon>
        <taxon>Spirochaetota</taxon>
        <taxon>Spirochaetia</taxon>
        <taxon>Spirochaetales</taxon>
        <taxon>Borreliaceae</taxon>
        <taxon>Borreliella</taxon>
    </lineage>
</organism>
<keyword id="KW-0227">DNA damage</keyword>
<keyword id="KW-0234">DNA repair</keyword>
<keyword id="KW-0235">DNA replication</keyword>
<keyword id="KW-0436">Ligase</keyword>
<keyword id="KW-0460">Magnesium</keyword>
<keyword id="KW-0464">Manganese</keyword>
<keyword id="KW-0479">Metal-binding</keyword>
<keyword id="KW-0520">NAD</keyword>
<keyword id="KW-0862">Zinc</keyword>
<accession>Q660X2</accession>